<organism>
    <name type="scientific">Haloquadratum walsbyi (strain DSM 16790 / HBSQ001)</name>
    <dbReference type="NCBI Taxonomy" id="362976"/>
    <lineage>
        <taxon>Archaea</taxon>
        <taxon>Methanobacteriati</taxon>
        <taxon>Methanobacteriota</taxon>
        <taxon>Stenosarchaea group</taxon>
        <taxon>Halobacteria</taxon>
        <taxon>Halobacteriales</taxon>
        <taxon>Haloferacaceae</taxon>
        <taxon>Haloquadratum</taxon>
    </lineage>
</organism>
<evidence type="ECO:0000255" key="1">
    <source>
        <dbReference type="HAMAP-Rule" id="MF_01337"/>
    </source>
</evidence>
<evidence type="ECO:0000305" key="2"/>
<reference key="1">
    <citation type="journal article" date="2006" name="BMC Genomics">
        <title>The genome of the square archaeon Haloquadratum walsbyi: life at the limits of water activity.</title>
        <authorList>
            <person name="Bolhuis H."/>
            <person name="Palm P."/>
            <person name="Wende A."/>
            <person name="Falb M."/>
            <person name="Rampp M."/>
            <person name="Rodriguez-Valera F."/>
            <person name="Pfeiffer F."/>
            <person name="Oesterhelt D."/>
        </authorList>
    </citation>
    <scope>NUCLEOTIDE SEQUENCE [LARGE SCALE GENOMIC DNA]</scope>
    <source>
        <strain>DSM 16790 / HBSQ001</strain>
    </source>
</reference>
<name>RL18_HALWD</name>
<dbReference type="EMBL" id="AM180088">
    <property type="protein sequence ID" value="CAJ52930.1"/>
    <property type="molecule type" value="Genomic_DNA"/>
</dbReference>
<dbReference type="RefSeq" id="WP_011572043.1">
    <property type="nucleotide sequence ID" value="NC_008212.1"/>
</dbReference>
<dbReference type="SMR" id="Q18GG8"/>
<dbReference type="STRING" id="362976.HQ_2823A"/>
<dbReference type="GeneID" id="4194607"/>
<dbReference type="KEGG" id="hwa:HQ_2823A"/>
<dbReference type="eggNOG" id="arCOG04088">
    <property type="taxonomic scope" value="Archaea"/>
</dbReference>
<dbReference type="HOGENOM" id="CLU_056222_2_0_2"/>
<dbReference type="Proteomes" id="UP000001975">
    <property type="component" value="Chromosome"/>
</dbReference>
<dbReference type="GO" id="GO:0022625">
    <property type="term" value="C:cytosolic large ribosomal subunit"/>
    <property type="evidence" value="ECO:0007669"/>
    <property type="project" value="TreeGrafter"/>
</dbReference>
<dbReference type="GO" id="GO:0008097">
    <property type="term" value="F:5S rRNA binding"/>
    <property type="evidence" value="ECO:0007669"/>
    <property type="project" value="InterPro"/>
</dbReference>
<dbReference type="GO" id="GO:0003735">
    <property type="term" value="F:structural constituent of ribosome"/>
    <property type="evidence" value="ECO:0007669"/>
    <property type="project" value="InterPro"/>
</dbReference>
<dbReference type="GO" id="GO:0000027">
    <property type="term" value="P:ribosomal large subunit assembly"/>
    <property type="evidence" value="ECO:0007669"/>
    <property type="project" value="TreeGrafter"/>
</dbReference>
<dbReference type="GO" id="GO:0006412">
    <property type="term" value="P:translation"/>
    <property type="evidence" value="ECO:0007669"/>
    <property type="project" value="UniProtKB-UniRule"/>
</dbReference>
<dbReference type="CDD" id="cd00432">
    <property type="entry name" value="Ribosomal_L18_L5e"/>
    <property type="match status" value="1"/>
</dbReference>
<dbReference type="FunFam" id="3.30.420.100:FF:000008">
    <property type="entry name" value="50S ribosomal protein L18"/>
    <property type="match status" value="1"/>
</dbReference>
<dbReference type="Gene3D" id="3.30.420.100">
    <property type="match status" value="1"/>
</dbReference>
<dbReference type="HAMAP" id="MF_01337_A">
    <property type="entry name" value="Ribosomal_uL18_A"/>
    <property type="match status" value="1"/>
</dbReference>
<dbReference type="InterPro" id="IPR005485">
    <property type="entry name" value="Rbsml_uL18_euk"/>
</dbReference>
<dbReference type="NCBIfam" id="NF006342">
    <property type="entry name" value="PRK08569.1"/>
    <property type="match status" value="1"/>
</dbReference>
<dbReference type="PANTHER" id="PTHR23410:SF12">
    <property type="entry name" value="LARGE RIBOSOMAL SUBUNIT PROTEIN UL18"/>
    <property type="match status" value="1"/>
</dbReference>
<dbReference type="PANTHER" id="PTHR23410">
    <property type="entry name" value="RIBOSOMAL PROTEIN L5-RELATED"/>
    <property type="match status" value="1"/>
</dbReference>
<dbReference type="Pfam" id="PF17144">
    <property type="entry name" value="Ribosomal_L5e"/>
    <property type="match status" value="2"/>
</dbReference>
<dbReference type="PRINTS" id="PR00058">
    <property type="entry name" value="RIBOSOMALL5"/>
</dbReference>
<dbReference type="SUPFAM" id="SSF53137">
    <property type="entry name" value="Translational machinery components"/>
    <property type="match status" value="1"/>
</dbReference>
<keyword id="KW-1185">Reference proteome</keyword>
<keyword id="KW-0687">Ribonucleoprotein</keyword>
<keyword id="KW-0689">Ribosomal protein</keyword>
<keyword id="KW-0694">RNA-binding</keyword>
<keyword id="KW-0699">rRNA-binding</keyword>
<accession>Q18GG8</accession>
<gene>
    <name evidence="1" type="primary">rpl18</name>
    <name type="ordered locus">HQ_2823A</name>
</gene>
<sequence length="205" mass="22584">MATGPRYKVPMRRRREVRTDYHQRLRLLKSGKPRLVARVSNRHVRAQLITPGPDGDETHVAASSEHLSEYGWEAPTGNLPSAYLTGYLAGMRAIEAGLDEAVLDIGLNTATPGNKVFVVQEGAIDAGVSIPHNESVLADWSRNRGEHIAAYAEQRDEPLYNSDFDATTLPEHFDTVLETIQDADITMNTDADTDNNNSQSVGDNE</sequence>
<protein>
    <recommendedName>
        <fullName evidence="1">Large ribosomal subunit protein uL18</fullName>
    </recommendedName>
    <alternativeName>
        <fullName evidence="2">50S ribosomal protein L18</fullName>
    </alternativeName>
</protein>
<comment type="function">
    <text evidence="1">This is one of the proteins that bind and probably mediate the attachment of the 5S RNA into the large ribosomal subunit, where it forms part of the central protuberance.</text>
</comment>
<comment type="subunit">
    <text evidence="1">Part of the 50S ribosomal subunit. Contacts the 5S and 23S rRNAs.</text>
</comment>
<comment type="similarity">
    <text evidence="1">Belongs to the universal ribosomal protein uL18 family.</text>
</comment>
<feature type="chain" id="PRO_0000251395" description="Large ribosomal subunit protein uL18">
    <location>
        <begin position="1"/>
        <end position="205"/>
    </location>
</feature>
<proteinExistence type="inferred from homology"/>